<gene>
    <name evidence="12" type="primary">atg-2</name>
    <name evidence="12" type="ORF">M03A8.2</name>
</gene>
<name>ATG2_CAEEL</name>
<comment type="function">
    <text evidence="2 6 7 8">Lipid transfer protein involved in autophagosome assembly and in the distribution of atg-9 and atg-13 during the autophagy-mediated degradation of protein aggregates (PubMed:21802374, PubMed:25124690). Tethers the edge of the isolation membrane (IM) to the endoplasmic reticulum (ER) and mediates direct lipid transfer from ER to IM for IM expansion (By similarity). Binds to the ER exit site (ERES), which is the membrane source for autophagosome formation, and extracts phospholipids from the membrane source to the IM for membrane expansion (By similarity). Involved in autophagy-mediated degradation of ribosomal RNA and ribosomal proteins in lysosomes, which is essential for maintaining nucleotide homeostasis (PubMed:30102152).</text>
</comment>
<comment type="catalytic activity">
    <reaction evidence="2">
        <text>a 1,2-diacyl-sn-glycero-3-phospho-L-serine(in) = a 1,2-diacyl-sn-glycero-3-phospho-L-serine(out)</text>
        <dbReference type="Rhea" id="RHEA:38663"/>
        <dbReference type="ChEBI" id="CHEBI:57262"/>
    </reaction>
</comment>
<comment type="catalytic activity">
    <reaction evidence="2">
        <text>a 1,2-diacyl-sn-glycero-3-phosphoethanolamine(in) = a 1,2-diacyl-sn-glycero-3-phosphoethanolamine(out)</text>
        <dbReference type="Rhea" id="RHEA:38895"/>
        <dbReference type="ChEBI" id="CHEBI:64612"/>
    </reaction>
</comment>
<comment type="subunit">
    <text evidence="6">Interacts with epg-6; the interaction is direct.</text>
</comment>
<comment type="subcellular location">
    <subcellularLocation>
        <location evidence="3">Preautophagosomal structure membrane</location>
        <topology evidence="3">Peripheral membrane protein</topology>
    </subcellularLocation>
    <subcellularLocation>
        <location evidence="3">Lipid droplet</location>
    </subcellularLocation>
    <subcellularLocation>
        <location evidence="1">Endoplasmic reticulum membrane</location>
        <topology evidence="1">Peripheral membrane protein</topology>
    </subcellularLocation>
    <subcellularLocation>
        <location evidence="10">Cytoplasm</location>
    </subcellularLocation>
</comment>
<comment type="similarity">
    <text evidence="9">Belongs to the ATG2 family.</text>
</comment>
<proteinExistence type="evidence at protein level"/>
<feature type="chain" id="PRO_0000446906" description="Autophagy-related protein 2">
    <location>
        <begin position="1"/>
        <end position="2290"/>
    </location>
</feature>
<feature type="domain" description="Chorein N-terminal" evidence="4">
    <location>
        <begin position="10"/>
        <end position="99"/>
    </location>
</feature>
<feature type="region of interest" description="Required for epg-6 binding" evidence="6">
    <location>
        <begin position="829"/>
        <end position="1549"/>
    </location>
</feature>
<feature type="region of interest" description="Disordered" evidence="5">
    <location>
        <begin position="1678"/>
        <end position="1727"/>
    </location>
</feature>
<feature type="region of interest" description="Disordered" evidence="5">
    <location>
        <begin position="1805"/>
        <end position="1851"/>
    </location>
</feature>
<feature type="region of interest" description="Disordered" evidence="5">
    <location>
        <begin position="1898"/>
        <end position="1919"/>
    </location>
</feature>
<feature type="region of interest" description="Disordered" evidence="5">
    <location>
        <begin position="1967"/>
        <end position="2003"/>
    </location>
</feature>
<feature type="coiled-coil region" evidence="4">
    <location>
        <begin position="1972"/>
        <end position="2011"/>
    </location>
</feature>
<feature type="compositionally biased region" description="Low complexity" evidence="5">
    <location>
        <begin position="1681"/>
        <end position="1692"/>
    </location>
</feature>
<feature type="compositionally biased region" description="Pro residues" evidence="5">
    <location>
        <begin position="1714"/>
        <end position="1723"/>
    </location>
</feature>
<feature type="compositionally biased region" description="Low complexity" evidence="5">
    <location>
        <begin position="1810"/>
        <end position="1830"/>
    </location>
</feature>
<feature type="compositionally biased region" description="Acidic residues" evidence="5">
    <location>
        <begin position="1988"/>
        <end position="1999"/>
    </location>
</feature>
<feature type="mutagenesis site" description="In bp576; Accumulation of early autophagic structures and defective degradation of P-granules and protein aggregates. Irregular distribution of protein aggregates containing the autophagy protein atg-9. Suppresses the lysosomal accumulation of ribosomal RNA and ribosomal proteins in a rnst-2 qx245 mutant background." evidence="6 8">
    <location>
        <begin position="715"/>
        <end position="2290"/>
    </location>
</feature>
<organism evidence="11">
    <name type="scientific">Caenorhabditis elegans</name>
    <dbReference type="NCBI Taxonomy" id="6239"/>
    <lineage>
        <taxon>Eukaryota</taxon>
        <taxon>Metazoa</taxon>
        <taxon>Ecdysozoa</taxon>
        <taxon>Nematoda</taxon>
        <taxon>Chromadorea</taxon>
        <taxon>Rhabditida</taxon>
        <taxon>Rhabditina</taxon>
        <taxon>Rhabditomorpha</taxon>
        <taxon>Rhabditoidea</taxon>
        <taxon>Rhabditidae</taxon>
        <taxon>Peloderinae</taxon>
        <taxon>Caenorhabditis</taxon>
    </lineage>
</organism>
<accession>Q21480</accession>
<keyword id="KW-0072">Autophagy</keyword>
<keyword id="KW-0175">Coiled coil</keyword>
<keyword id="KW-0963">Cytoplasm</keyword>
<keyword id="KW-0256">Endoplasmic reticulum</keyword>
<keyword id="KW-0551">Lipid droplet</keyword>
<keyword id="KW-0445">Lipid transport</keyword>
<keyword id="KW-0472">Membrane</keyword>
<keyword id="KW-1185">Reference proteome</keyword>
<keyword id="KW-0813">Transport</keyword>
<protein>
    <recommendedName>
        <fullName evidence="9">Autophagy-related protein 2</fullName>
    </recommendedName>
</protein>
<evidence type="ECO:0000250" key="1">
    <source>
        <dbReference type="UniProtKB" id="P53855"/>
    </source>
</evidence>
<evidence type="ECO:0000250" key="2">
    <source>
        <dbReference type="UniProtKB" id="Q2TAZ0"/>
    </source>
</evidence>
<evidence type="ECO:0000250" key="3">
    <source>
        <dbReference type="UniProtKB" id="Q96BY7"/>
    </source>
</evidence>
<evidence type="ECO:0000255" key="4"/>
<evidence type="ECO:0000256" key="5">
    <source>
        <dbReference type="SAM" id="MobiDB-lite"/>
    </source>
</evidence>
<evidence type="ECO:0000269" key="6">
    <source>
    </source>
</evidence>
<evidence type="ECO:0000269" key="7">
    <source>
    </source>
</evidence>
<evidence type="ECO:0000269" key="8">
    <source>
    </source>
</evidence>
<evidence type="ECO:0000305" key="9"/>
<evidence type="ECO:0000305" key="10">
    <source>
    </source>
</evidence>
<evidence type="ECO:0000312" key="11">
    <source>
        <dbReference type="Proteomes" id="UP000001940"/>
    </source>
</evidence>
<evidence type="ECO:0000312" key="12">
    <source>
        <dbReference type="WormBase" id="M03A8.2"/>
    </source>
</evidence>
<reference evidence="11" key="1">
    <citation type="journal article" date="1998" name="Science">
        <title>Genome sequence of the nematode C. elegans: a platform for investigating biology.</title>
        <authorList>
            <consortium name="The C. elegans sequencing consortium"/>
        </authorList>
    </citation>
    <scope>NUCLEOTIDE SEQUENCE [LARGE SCALE GENOMIC DNA]</scope>
    <source>
        <strain evidence="11">Bristol N2</strain>
    </source>
</reference>
<reference evidence="9" key="2">
    <citation type="journal article" date="2011" name="Dev. Cell">
        <title>The WD40 repeat PtdIns(3)P-binding protein EPG-6 regulates progression of omegasomes to autophagosomes.</title>
        <authorList>
            <person name="Lu Q."/>
            <person name="Yang P."/>
            <person name="Huang X."/>
            <person name="Hu W."/>
            <person name="Guo B."/>
            <person name="Wu F."/>
            <person name="Lin L."/>
            <person name="Kovacs A.L."/>
            <person name="Yu L."/>
            <person name="Zhang H."/>
        </authorList>
    </citation>
    <scope>FUNCTION</scope>
    <scope>INTERACTION WITH EPG-6</scope>
    <scope>SUBCELLULAR LOCATION</scope>
    <scope>MUTAGENESIS OF 715-TRP--LYS-2290</scope>
</reference>
<reference evidence="9" key="3">
    <citation type="journal article" date="2014" name="EMBO Rep.">
        <title>PI3P phosphatase activity is required for autophagosome maturation and autolysosome formation.</title>
        <authorList>
            <person name="Wu Y."/>
            <person name="Cheng S."/>
            <person name="Zhao H."/>
            <person name="Zou W."/>
            <person name="Yoshina S."/>
            <person name="Mitani S."/>
            <person name="Zhang H."/>
            <person name="Wang X."/>
        </authorList>
    </citation>
    <scope>FUNCTION</scope>
</reference>
<reference key="4">
    <citation type="journal article" date="2018" name="Elife">
        <title>Autophagy-dependent ribosomal RNA degradation is essential for maintaining nucleotide homeostasis during C. elegans development.</title>
        <authorList>
            <person name="Liu Y."/>
            <person name="Zou W."/>
            <person name="Yang P."/>
            <person name="Wang L."/>
            <person name="Ma Y."/>
            <person name="Zhang H."/>
            <person name="Wang X."/>
        </authorList>
    </citation>
    <scope>FUNCTION</scope>
    <scope>MUTAGENESIS OF 715-TRP--LYS-2290</scope>
</reference>
<sequence length="2290" mass="256298">MTLSTFNRVWCKVMLQRYMGAWLDNNLSVDQLSLELANGCLELDNLDINTKAVSNGFLQCNIPLKLIDGYLGKIKIEIPWLSLMTDPTRMCIEDLQLTFRGAEVMKINDIETLTSMIESVLMGLSTDDMARSVYEEVSKENNVASELLGPDDTADSFSGFIDAVYSRFCLKIKHLTLRFETDPKNRSTMATALEIRVETITFMDEQMRSCEMDHTNATDLVTTQPHGVVSTTNLRKNLTFSGVTFHTDVFSQINNDGMGDEENVLITSMHIRREKAKQMSPTKSVQNSLHPEMFQSAMSDMDAFHSCYDKLTQDYCSPDQLETLRTAPAEPELFSAPIQCAEVVGDISCVFRIKNGANDVNYADVDESKVETDVFIKGINVFATPSQIEIVNRFFSSIVTPKELVVHEQGKPMSKEDYENMTKNMEPNQSNEPPMAGASFGGNWNVGEVFREFDDLKSIKEKEKSEKEKFKSLKASGNIKEEFTVNTHIGTVLMYIPHCDYMSSDYAQQHGGYANVLNYLKKESESFFKSIQGYSFMSKHGLANIRQQSDSFYPKDHLRIVGGSLGITSSCKRVGNVDSFLCRVVATHFDMLEYLTPESAPENSTPIRIGLLDYSEQENLESDPNFKMVLSTSSEQKGLTKVDILLGAVKTELDFSIIDRISNLIACRPFFDEALTNYGNRNTVPQLKDDLYSDVLIAEDDVKSKTLVNLKCSNWQVDLRIPKADLRDPTGSRLPFSQRHVHNEFLRLGIKEIDVSIPIEKSVTLIEILCTEMIGDFCGEGLNIPKQQQRILHASKNGFDKINLKLTLCSDAKKLPGCGRKTSTSGIPDSMMKSVSADIMMAHPKKEGPFSKVPRSYCSHDGEETEEIIQAGTRKEILDFQEECQNFASTFMLFTVPVLKLHIPEKNFLEILYNRLVNDLALFQPAAPAFRNNQSTNSNVQPLESFQECVSPKNYAESEHSDLDDDVATLHESIESLNFDRDIPHTFVMTLNANKCTVLCNTAIKEAEKQPESSQVSLDLEKVHIGTTAGYHGDINHTYFHFTSSKAAAGSIDSPRAPRIPNLISAKDFGKWTKDCNQLEHVPITDELSSGSTEDAFAVALHMHFRPDVNMKDVLLGIALRNSQLQAKPFRHWGAFWITQLADLFTLQDYAIPGYELPSVSTDLHICFENAIIGYDHAWVNPNSKLKLRATLGQCNLASSIVSDMNISKTLCIFESCRLYMSNDLTKDAVRFEGYGTQKVSPKKFIPFLDLGSVQLDILFAVGDETGLRTNPTFEIRCQNDIINAWACADSLATFMKTVMEYTSHEQIPIKTPEEESQELMKSTKTDDINKSVAGESVWSDASTGSKHIQKMTVGANLPDDVEKRIQAMIQEAVNENDERDGIAIGEDAVREFATIQPKHDANETNESFEHVASRNFSVTDDEFCMVDDNIFGSGITIQPGESRTRPMPAKQLPEEPLINGSEFFQTIEDSGSDALYQTMSGQINPVLRYFLKDVTVRLSLYAGNDLSTSPSPIKTYCTEEYRNGFGPEQKIEQNSTGGPNRDHSAFVVFELSKITYLKQIFDKTAPMLSTTLFQVNDIVIKDCVRASDIKEMLYQYSVTNQPRRATAPIVTVRMSETHSKEGKMRVSMLPIKINVDQDTLEFLTDFFEETSKLLDLPKNQMSMPLIQRPVIEVPADIGSKKTTPKTSVSSSEGDIARMYPSIPSPSLTLEPLRPSPVQPPTPLGDLTYLEKISSNHQSPVKRPIIDAPLTASAVSIGKIFERDAHSDEDEEEIIDPIQMAAALEIRELNEELGRIEQLEKKKTDDLFKQSYSSSSSETESESSAPQSSQVRRLHESLDASNPTGLSDLTGDWADDHDLTYTHHDVVRQESPSFNCNISPIKGYSPPAELRPLNLMDSETERDSSASPVTSSPIKPARNIKKELPPLKMPRQPLSNDDILMRSTMMGSVHPSQSVHNLVDTSDDLEEHGNFLDSIDNEDDNEKQKIEEEMEEDEKEEEEERNKEIQEAVERGETFFKQFVFSPSVNIYVDYQGKRKITMEKAGALVGLLMAFGQLNQMPINLRKIDTRTGLLGTGRCMQHAIGEWSGDLLTNMPSVIASYGPISPLVQIGRGVVDLFLMPVAEFRKDDGNVMKGVQRGVGSFSVSSAAGIVGMAQTVTGFVQSLAEMTMKEIKPDDPSTRRVARRYNRNHGMNPTDVRHSLQLAYGILYDGYHQTRDDLELAAQEDRASGNSVVRSAFRYAVPTFLGPIVMATQVTYQLLGGLRNQLRPDTYQDERRKWGEKDVPGGVNK</sequence>
<dbReference type="EMBL" id="BX284606">
    <property type="protein sequence ID" value="CCD70983.2"/>
    <property type="molecule type" value="Genomic_DNA"/>
</dbReference>
<dbReference type="RefSeq" id="NP_509145.3">
    <property type="nucleotide sequence ID" value="NM_076744.6"/>
</dbReference>
<dbReference type="ComplexPortal" id="CPX-3823">
    <property type="entry name" value="epg-6-atg-2 complex"/>
</dbReference>
<dbReference type="FunCoup" id="Q21480">
    <property type="interactions" value="2315"/>
</dbReference>
<dbReference type="STRING" id="6239.M03A8.2.2"/>
<dbReference type="PaxDb" id="6239-M03A8.2"/>
<dbReference type="PeptideAtlas" id="Q21480"/>
<dbReference type="EnsemblMetazoa" id="M03A8.2.1">
    <property type="protein sequence ID" value="M03A8.2.1"/>
    <property type="gene ID" value="WBGene00019748"/>
</dbReference>
<dbReference type="EnsemblMetazoa" id="M03A8.2.2">
    <property type="protein sequence ID" value="M03A8.2.2"/>
    <property type="gene ID" value="WBGene00019748"/>
</dbReference>
<dbReference type="GeneID" id="180949"/>
<dbReference type="KEGG" id="cel:CELE_M03A8.2"/>
<dbReference type="AGR" id="WB:WBGene00019748"/>
<dbReference type="CTD" id="180949"/>
<dbReference type="WormBase" id="M03A8.2">
    <property type="protein sequence ID" value="CE47193"/>
    <property type="gene ID" value="WBGene00019748"/>
    <property type="gene designation" value="atg-2"/>
</dbReference>
<dbReference type="eggNOG" id="KOG2993">
    <property type="taxonomic scope" value="Eukaryota"/>
</dbReference>
<dbReference type="GeneTree" id="ENSGT00620000087966"/>
<dbReference type="HOGENOM" id="CLU_001781_0_0_1"/>
<dbReference type="InParanoid" id="Q21480"/>
<dbReference type="OMA" id="VDNHFCL"/>
<dbReference type="OrthoDB" id="18982at2759"/>
<dbReference type="PhylomeDB" id="Q21480"/>
<dbReference type="PRO" id="PR:Q21480"/>
<dbReference type="Proteomes" id="UP000001940">
    <property type="component" value="Chromosome X"/>
</dbReference>
<dbReference type="Bgee" id="WBGene00019748">
    <property type="expression patterns" value="Expressed in pharyngeal muscle cell (C elegans) and 3 other cell types or tissues"/>
</dbReference>
<dbReference type="GO" id="GO:0005737">
    <property type="term" value="C:cytoplasm"/>
    <property type="evidence" value="ECO:0000314"/>
    <property type="project" value="ComplexPortal"/>
</dbReference>
<dbReference type="GO" id="GO:0005789">
    <property type="term" value="C:endoplasmic reticulum membrane"/>
    <property type="evidence" value="ECO:0007669"/>
    <property type="project" value="UniProtKB-SubCell"/>
</dbReference>
<dbReference type="GO" id="GO:0005811">
    <property type="term" value="C:lipid droplet"/>
    <property type="evidence" value="ECO:0007669"/>
    <property type="project" value="UniProtKB-SubCell"/>
</dbReference>
<dbReference type="GO" id="GO:0061908">
    <property type="term" value="C:phagophore"/>
    <property type="evidence" value="ECO:0000318"/>
    <property type="project" value="GO_Central"/>
</dbReference>
<dbReference type="GO" id="GO:0000407">
    <property type="term" value="C:phagophore assembly site"/>
    <property type="evidence" value="ECO:0000318"/>
    <property type="project" value="GO_Central"/>
</dbReference>
<dbReference type="GO" id="GO:0034045">
    <property type="term" value="C:phagophore assembly site membrane"/>
    <property type="evidence" value="ECO:0007669"/>
    <property type="project" value="UniProtKB-SubCell"/>
</dbReference>
<dbReference type="GO" id="GO:0032266">
    <property type="term" value="F:phosphatidylinositol-3-phosphate binding"/>
    <property type="evidence" value="ECO:0000318"/>
    <property type="project" value="GO_Central"/>
</dbReference>
<dbReference type="GO" id="GO:0043495">
    <property type="term" value="F:protein-membrane adaptor activity"/>
    <property type="evidence" value="ECO:0000318"/>
    <property type="project" value="GO_Central"/>
</dbReference>
<dbReference type="GO" id="GO:0000045">
    <property type="term" value="P:autophagosome assembly"/>
    <property type="evidence" value="ECO:0000318"/>
    <property type="project" value="GO_Central"/>
</dbReference>
<dbReference type="GO" id="GO:0000422">
    <property type="term" value="P:autophagy of mitochondrion"/>
    <property type="evidence" value="ECO:0000318"/>
    <property type="project" value="GO_Central"/>
</dbReference>
<dbReference type="GO" id="GO:0061723">
    <property type="term" value="P:glycophagy"/>
    <property type="evidence" value="ECO:0000318"/>
    <property type="project" value="GO_Central"/>
</dbReference>
<dbReference type="GO" id="GO:0006869">
    <property type="term" value="P:lipid transport"/>
    <property type="evidence" value="ECO:0007669"/>
    <property type="project" value="UniProtKB-KW"/>
</dbReference>
<dbReference type="GO" id="GO:0016236">
    <property type="term" value="P:macroautophagy"/>
    <property type="evidence" value="ECO:0000303"/>
    <property type="project" value="ComplexPortal"/>
</dbReference>
<dbReference type="GO" id="GO:0000425">
    <property type="term" value="P:pexophagy"/>
    <property type="evidence" value="ECO:0000318"/>
    <property type="project" value="GO_Central"/>
</dbReference>
<dbReference type="GO" id="GO:0034727">
    <property type="term" value="P:piecemeal microautophagy of the nucleus"/>
    <property type="evidence" value="ECO:0000318"/>
    <property type="project" value="GO_Central"/>
</dbReference>
<dbReference type="GO" id="GO:0010508">
    <property type="term" value="P:positive regulation of autophagy"/>
    <property type="evidence" value="ECO:0000315"/>
    <property type="project" value="UniProtKB"/>
</dbReference>
<dbReference type="GO" id="GO:0061709">
    <property type="term" value="P:reticulophagy"/>
    <property type="evidence" value="ECO:0000318"/>
    <property type="project" value="GO_Central"/>
</dbReference>
<dbReference type="InterPro" id="IPR026849">
    <property type="entry name" value="ATG2"/>
</dbReference>
<dbReference type="PANTHER" id="PTHR13190">
    <property type="entry name" value="AUTOPHAGY-RELATED 2, ISOFORM A"/>
    <property type="match status" value="1"/>
</dbReference>
<dbReference type="PANTHER" id="PTHR13190:SF1">
    <property type="entry name" value="AUTOPHAGY-RELATED 2, ISOFORM A"/>
    <property type="match status" value="1"/>
</dbReference>
<dbReference type="Pfam" id="PF13329">
    <property type="entry name" value="ATG2_CAD"/>
    <property type="match status" value="3"/>
</dbReference>